<keyword id="KW-0238">DNA-binding</keyword>
<keyword id="KW-0597">Phosphoprotein</keyword>
<keyword id="KW-0804">Transcription</keyword>
<keyword id="KW-0805">Transcription regulation</keyword>
<keyword id="KW-0902">Two-component regulatory system</keyword>
<evidence type="ECO:0000255" key="1">
    <source>
        <dbReference type="PROSITE-ProRule" id="PRU00112"/>
    </source>
</evidence>
<evidence type="ECO:0000255" key="2">
    <source>
        <dbReference type="PROSITE-ProRule" id="PRU00169"/>
    </source>
</evidence>
<protein>
    <recommendedName>
        <fullName>Uncharacterized response regulatory protein VP0538</fullName>
    </recommendedName>
</protein>
<name>Y538_VIBPA</name>
<organism>
    <name type="scientific">Vibrio parahaemolyticus serotype O3:K6 (strain RIMD 2210633)</name>
    <dbReference type="NCBI Taxonomy" id="223926"/>
    <lineage>
        <taxon>Bacteria</taxon>
        <taxon>Pseudomonadati</taxon>
        <taxon>Pseudomonadota</taxon>
        <taxon>Gammaproteobacteria</taxon>
        <taxon>Vibrionales</taxon>
        <taxon>Vibrionaceae</taxon>
        <taxon>Vibrio</taxon>
    </lineage>
</organism>
<gene>
    <name type="ordered locus">VP0538</name>
</gene>
<accession>Q87S86</accession>
<sequence length="242" mass="26992">MLTALVIDDEQFAREELAELLDETGQVEVVGDASNAILGLKKINELKPDVVFLDIQMPQVTGIELLGMLDPETMPYVVFVTAYDQYAIQAFEDNAFDYLLKPVDPCRLNKTVKRLNKVISQSALTQQLSAITPDTLDQIPCIGHNRIVIMATETVECAYSDISGVHVRSTSQTASTQLTLKTLEEKTPLVRCHRQYLVSIKAISEIKLLENGLAEIITKTGFEIPVSRRYLKVLKEMLGISH</sequence>
<proteinExistence type="inferred from homology"/>
<dbReference type="EMBL" id="BA000031">
    <property type="protein sequence ID" value="BAC58801.1"/>
    <property type="molecule type" value="Genomic_DNA"/>
</dbReference>
<dbReference type="RefSeq" id="NP_796917.1">
    <property type="nucleotide sequence ID" value="NC_004603.1"/>
</dbReference>
<dbReference type="SMR" id="Q87S86"/>
<dbReference type="GeneID" id="1188006"/>
<dbReference type="KEGG" id="vpa:VP0538"/>
<dbReference type="PATRIC" id="fig|223926.6.peg.511"/>
<dbReference type="eggNOG" id="COG3279">
    <property type="taxonomic scope" value="Bacteria"/>
</dbReference>
<dbReference type="HOGENOM" id="CLU_000445_14_1_6"/>
<dbReference type="Proteomes" id="UP000002493">
    <property type="component" value="Chromosome 1"/>
</dbReference>
<dbReference type="GO" id="GO:0005829">
    <property type="term" value="C:cytosol"/>
    <property type="evidence" value="ECO:0007669"/>
    <property type="project" value="TreeGrafter"/>
</dbReference>
<dbReference type="GO" id="GO:0032993">
    <property type="term" value="C:protein-DNA complex"/>
    <property type="evidence" value="ECO:0007669"/>
    <property type="project" value="TreeGrafter"/>
</dbReference>
<dbReference type="GO" id="GO:0000156">
    <property type="term" value="F:phosphorelay response regulator activity"/>
    <property type="evidence" value="ECO:0007669"/>
    <property type="project" value="TreeGrafter"/>
</dbReference>
<dbReference type="GO" id="GO:0000976">
    <property type="term" value="F:transcription cis-regulatory region binding"/>
    <property type="evidence" value="ECO:0007669"/>
    <property type="project" value="TreeGrafter"/>
</dbReference>
<dbReference type="GO" id="GO:0006355">
    <property type="term" value="P:regulation of DNA-templated transcription"/>
    <property type="evidence" value="ECO:0007669"/>
    <property type="project" value="TreeGrafter"/>
</dbReference>
<dbReference type="CDD" id="cd17532">
    <property type="entry name" value="REC_LytTR_AlgR-like"/>
    <property type="match status" value="1"/>
</dbReference>
<dbReference type="FunFam" id="3.40.50.2300:FF:000051">
    <property type="entry name" value="Two-component response regulator yehT"/>
    <property type="match status" value="1"/>
</dbReference>
<dbReference type="Gene3D" id="3.40.50.2300">
    <property type="match status" value="1"/>
</dbReference>
<dbReference type="Gene3D" id="2.40.50.1020">
    <property type="entry name" value="LytTr DNA-binding domain"/>
    <property type="match status" value="1"/>
</dbReference>
<dbReference type="InterPro" id="IPR011006">
    <property type="entry name" value="CheY-like_superfamily"/>
</dbReference>
<dbReference type="InterPro" id="IPR007492">
    <property type="entry name" value="LytTR_DNA-bd_dom"/>
</dbReference>
<dbReference type="InterPro" id="IPR001789">
    <property type="entry name" value="Sig_transdc_resp-reg_receiver"/>
</dbReference>
<dbReference type="InterPro" id="IPR039420">
    <property type="entry name" value="WalR-like"/>
</dbReference>
<dbReference type="NCBIfam" id="NF008677">
    <property type="entry name" value="PRK11697.1"/>
    <property type="match status" value="1"/>
</dbReference>
<dbReference type="PANTHER" id="PTHR48111">
    <property type="entry name" value="REGULATOR OF RPOS"/>
    <property type="match status" value="1"/>
</dbReference>
<dbReference type="PANTHER" id="PTHR48111:SF3">
    <property type="entry name" value="TRANSCRIPTIONAL REGULATORY PROTEIN BTSR"/>
    <property type="match status" value="1"/>
</dbReference>
<dbReference type="Pfam" id="PF04397">
    <property type="entry name" value="LytTR"/>
    <property type="match status" value="1"/>
</dbReference>
<dbReference type="Pfam" id="PF00072">
    <property type="entry name" value="Response_reg"/>
    <property type="match status" value="1"/>
</dbReference>
<dbReference type="SMART" id="SM00850">
    <property type="entry name" value="LytTR"/>
    <property type="match status" value="1"/>
</dbReference>
<dbReference type="SMART" id="SM00448">
    <property type="entry name" value="REC"/>
    <property type="match status" value="1"/>
</dbReference>
<dbReference type="SUPFAM" id="SSF52172">
    <property type="entry name" value="CheY-like"/>
    <property type="match status" value="1"/>
</dbReference>
<dbReference type="PROSITE" id="PS50930">
    <property type="entry name" value="HTH_LYTTR"/>
    <property type="match status" value="1"/>
</dbReference>
<dbReference type="PROSITE" id="PS50110">
    <property type="entry name" value="RESPONSE_REGULATORY"/>
    <property type="match status" value="1"/>
</dbReference>
<feature type="chain" id="PRO_0000081371" description="Uncharacterized response regulatory protein VP0538">
    <location>
        <begin position="1"/>
        <end position="242"/>
    </location>
</feature>
<feature type="domain" description="Response regulatory" evidence="2">
    <location>
        <begin position="3"/>
        <end position="116"/>
    </location>
</feature>
<feature type="domain" description="HTH LytTR-type" evidence="1">
    <location>
        <begin position="139"/>
        <end position="240"/>
    </location>
</feature>
<feature type="modified residue" description="4-aspartylphosphate" evidence="2">
    <location>
        <position position="54"/>
    </location>
</feature>
<reference key="1">
    <citation type="journal article" date="2003" name="Lancet">
        <title>Genome sequence of Vibrio parahaemolyticus: a pathogenic mechanism distinct from that of V. cholerae.</title>
        <authorList>
            <person name="Makino K."/>
            <person name="Oshima K."/>
            <person name="Kurokawa K."/>
            <person name="Yokoyama K."/>
            <person name="Uda T."/>
            <person name="Tagomori K."/>
            <person name="Iijima Y."/>
            <person name="Najima M."/>
            <person name="Nakano M."/>
            <person name="Yamashita A."/>
            <person name="Kubota Y."/>
            <person name="Kimura S."/>
            <person name="Yasunaga T."/>
            <person name="Honda T."/>
            <person name="Shinagawa H."/>
            <person name="Hattori M."/>
            <person name="Iida T."/>
        </authorList>
    </citation>
    <scope>NUCLEOTIDE SEQUENCE [LARGE SCALE GENOMIC DNA]</scope>
    <source>
        <strain>RIMD 2210633</strain>
    </source>
</reference>